<protein>
    <recommendedName>
        <fullName>Beta-glucuronidase</fullName>
        <ecNumber>3.2.1.31</ecNumber>
    </recommendedName>
</protein>
<keyword id="KW-0325">Glycoprotein</keyword>
<keyword id="KW-0326">Glycosidase</keyword>
<keyword id="KW-0378">Hydrolase</keyword>
<keyword id="KW-0458">Lysosome</keyword>
<keyword id="KW-0732">Signal</keyword>
<evidence type="ECO:0000250" key="1"/>
<evidence type="ECO:0000255" key="2"/>
<evidence type="ECO:0000305" key="3"/>
<dbReference type="EC" id="3.2.1.31"/>
<dbReference type="EMBL" id="AF084552">
    <property type="protein sequence ID" value="AAC34593.1"/>
    <property type="molecule type" value="mRNA"/>
</dbReference>
<dbReference type="SMR" id="O77695"/>
<dbReference type="CAZy" id="GH2">
    <property type="family name" value="Glycoside Hydrolase Family 2"/>
</dbReference>
<dbReference type="GlyCosmos" id="O77695">
    <property type="glycosylation" value="4 sites, No reported glycans"/>
</dbReference>
<dbReference type="GO" id="GO:0005615">
    <property type="term" value="C:extracellular space"/>
    <property type="evidence" value="ECO:0007669"/>
    <property type="project" value="TreeGrafter"/>
</dbReference>
<dbReference type="GO" id="GO:0005764">
    <property type="term" value="C:lysosome"/>
    <property type="evidence" value="ECO:0007669"/>
    <property type="project" value="UniProtKB-SubCell"/>
</dbReference>
<dbReference type="GO" id="GO:0004566">
    <property type="term" value="F:beta-glucuronidase activity"/>
    <property type="evidence" value="ECO:0007669"/>
    <property type="project" value="UniProtKB-EC"/>
</dbReference>
<dbReference type="GO" id="GO:0030246">
    <property type="term" value="F:carbohydrate binding"/>
    <property type="evidence" value="ECO:0007669"/>
    <property type="project" value="TreeGrafter"/>
</dbReference>
<dbReference type="GO" id="GO:0005102">
    <property type="term" value="F:signaling receptor binding"/>
    <property type="evidence" value="ECO:0007669"/>
    <property type="project" value="TreeGrafter"/>
</dbReference>
<dbReference type="GO" id="GO:0005975">
    <property type="term" value="P:carbohydrate metabolic process"/>
    <property type="evidence" value="ECO:0007669"/>
    <property type="project" value="InterPro"/>
</dbReference>
<dbReference type="GO" id="GO:0019391">
    <property type="term" value="P:glucuronoside catabolic process"/>
    <property type="evidence" value="ECO:0007669"/>
    <property type="project" value="TreeGrafter"/>
</dbReference>
<dbReference type="FunFam" id="2.60.120.260:FF:000027">
    <property type="entry name" value="Beta-glucuronidase"/>
    <property type="match status" value="1"/>
</dbReference>
<dbReference type="FunFam" id="2.60.40.10:FF:000628">
    <property type="entry name" value="Beta-glucuronidase"/>
    <property type="match status" value="1"/>
</dbReference>
<dbReference type="FunFam" id="3.20.20.80:FF:000029">
    <property type="entry name" value="Beta-glucuronidase"/>
    <property type="match status" value="1"/>
</dbReference>
<dbReference type="Gene3D" id="2.60.120.260">
    <property type="entry name" value="Galactose-binding domain-like"/>
    <property type="match status" value="1"/>
</dbReference>
<dbReference type="Gene3D" id="3.20.20.80">
    <property type="entry name" value="Glycosidases"/>
    <property type="match status" value="1"/>
</dbReference>
<dbReference type="Gene3D" id="2.60.40.10">
    <property type="entry name" value="Immunoglobulins"/>
    <property type="match status" value="1"/>
</dbReference>
<dbReference type="InterPro" id="IPR036156">
    <property type="entry name" value="Beta-gal/glucu_dom_sf"/>
</dbReference>
<dbReference type="InterPro" id="IPR008979">
    <property type="entry name" value="Galactose-bd-like_sf"/>
</dbReference>
<dbReference type="InterPro" id="IPR006101">
    <property type="entry name" value="Glyco_hydro_2"/>
</dbReference>
<dbReference type="InterPro" id="IPR023232">
    <property type="entry name" value="Glyco_hydro_2_AS"/>
</dbReference>
<dbReference type="InterPro" id="IPR006103">
    <property type="entry name" value="Glyco_hydro_2_cat"/>
</dbReference>
<dbReference type="InterPro" id="IPR023230">
    <property type="entry name" value="Glyco_hydro_2_CS"/>
</dbReference>
<dbReference type="InterPro" id="IPR006102">
    <property type="entry name" value="Glyco_hydro_2_Ig-like"/>
</dbReference>
<dbReference type="InterPro" id="IPR006104">
    <property type="entry name" value="Glyco_hydro_2_N"/>
</dbReference>
<dbReference type="InterPro" id="IPR017853">
    <property type="entry name" value="Glycoside_hydrolase_SF"/>
</dbReference>
<dbReference type="InterPro" id="IPR013783">
    <property type="entry name" value="Ig-like_fold"/>
</dbReference>
<dbReference type="NCBIfam" id="NF007538">
    <property type="entry name" value="PRK10150.1"/>
    <property type="match status" value="1"/>
</dbReference>
<dbReference type="PANTHER" id="PTHR10066">
    <property type="entry name" value="BETA-GLUCURONIDASE"/>
    <property type="match status" value="1"/>
</dbReference>
<dbReference type="PANTHER" id="PTHR10066:SF67">
    <property type="entry name" value="BETA-GLUCURONIDASE"/>
    <property type="match status" value="1"/>
</dbReference>
<dbReference type="Pfam" id="PF00703">
    <property type="entry name" value="Glyco_hydro_2"/>
    <property type="match status" value="1"/>
</dbReference>
<dbReference type="Pfam" id="PF02836">
    <property type="entry name" value="Glyco_hydro_2_C"/>
    <property type="match status" value="1"/>
</dbReference>
<dbReference type="Pfam" id="PF02837">
    <property type="entry name" value="Glyco_hydro_2_N"/>
    <property type="match status" value="1"/>
</dbReference>
<dbReference type="PRINTS" id="PR00132">
    <property type="entry name" value="GLHYDRLASE2"/>
</dbReference>
<dbReference type="SUPFAM" id="SSF51445">
    <property type="entry name" value="(Trans)glycosidases"/>
    <property type="match status" value="1"/>
</dbReference>
<dbReference type="SUPFAM" id="SSF49303">
    <property type="entry name" value="beta-Galactosidase/glucuronidase domain"/>
    <property type="match status" value="1"/>
</dbReference>
<dbReference type="SUPFAM" id="SSF49785">
    <property type="entry name" value="Galactose-binding domain-like"/>
    <property type="match status" value="1"/>
</dbReference>
<dbReference type="PROSITE" id="PS00719">
    <property type="entry name" value="GLYCOSYL_HYDROL_F2_1"/>
    <property type="match status" value="1"/>
</dbReference>
<dbReference type="PROSITE" id="PS00608">
    <property type="entry name" value="GLYCOSYL_HYDROL_F2_2"/>
    <property type="match status" value="1"/>
</dbReference>
<gene>
    <name type="primary">GUSB</name>
</gene>
<organism>
    <name type="scientific">Chlorocebus aethiops</name>
    <name type="common">Green monkey</name>
    <name type="synonym">Cercopithecus aethiops</name>
    <dbReference type="NCBI Taxonomy" id="9534"/>
    <lineage>
        <taxon>Eukaryota</taxon>
        <taxon>Metazoa</taxon>
        <taxon>Chordata</taxon>
        <taxon>Craniata</taxon>
        <taxon>Vertebrata</taxon>
        <taxon>Euteleostomi</taxon>
        <taxon>Mammalia</taxon>
        <taxon>Eutheria</taxon>
        <taxon>Euarchontoglires</taxon>
        <taxon>Primates</taxon>
        <taxon>Haplorrhini</taxon>
        <taxon>Catarrhini</taxon>
        <taxon>Cercopithecidae</taxon>
        <taxon>Cercopithecinae</taxon>
        <taxon>Chlorocebus</taxon>
    </lineage>
</organism>
<comment type="function">
    <text evidence="1">Plays an important role in the degradation of dermatan and keratan sulfates.</text>
</comment>
<comment type="catalytic activity">
    <reaction>
        <text>a beta-D-glucuronoside + H2O = D-glucuronate + an alcohol</text>
        <dbReference type="Rhea" id="RHEA:17633"/>
        <dbReference type="ChEBI" id="CHEBI:15377"/>
        <dbReference type="ChEBI" id="CHEBI:30879"/>
        <dbReference type="ChEBI" id="CHEBI:58720"/>
        <dbReference type="ChEBI" id="CHEBI:83411"/>
        <dbReference type="EC" id="3.2.1.31"/>
    </reaction>
</comment>
<comment type="activity regulation">
    <text evidence="1">Inhibited by L-aspartic acid.</text>
</comment>
<comment type="subunit">
    <text evidence="1">Homotetramer.</text>
</comment>
<comment type="subcellular location">
    <subcellularLocation>
        <location>Lysosome</location>
    </subcellularLocation>
</comment>
<comment type="similarity">
    <text evidence="3">Belongs to the glycosyl hydrolase 2 family.</text>
</comment>
<accession>O77695</accession>
<reference key="1">
    <citation type="submission" date="1998-08" db="EMBL/GenBank/DDBJ databases">
        <title>Partial cDNA sequence of Cercopithecus aethiops (COS7 cell) beta-glucuronidase.</title>
        <authorList>
            <person name="Vervoort R."/>
        </authorList>
    </citation>
    <scope>NUCLEOTIDE SEQUENCE [MRNA]</scope>
</reference>
<sequence length="648" mass="74632">GLAMAWAVLGPLLWGCALALQGGMLYPRESQSRERKELDGLWSFRADFSDNRRRGFEEQWYRRPLRESGPTLDMPVPSSFNDISQDWRLRHFVGWVWYEREVILPERWTQDLSTRVVLRIGSAHAYAIVWVNGVHTLEHEGGYLPFEADISNLVQVGPLSSHVRITIAINNTLTSTTLPPGTIQYLTDISKYPKGYFIQNTYFDFFNYAGLQRSVLLYTTPTAYIDDITVTTGVEHDTGLVNYQISVKGSNLFELEVRLLDAENKLVANGTGIQGQLKVPGARLWWPYLMHERPAYLYSLEVRLTAQTSLGPVSDFYTLPVGIRTVAVTESQFLINGKPFYFHGVNKHEDADIRGKGFDWPLLVKDFNLLRWLGANAFRTSHYPYAEEVLQMCDRYGIVVIDECPGVGLALPQFFNNVSLQNHMRVMEEVVRRDKNHPAVVMWSVANEPASHLESAGYYLKMVITHTKALDPSRPVTFVTNSNYAADKGAPYVDVICLNSYYSWYHDYGHLELIQRQLTTQFENWYKTYQKPIIQSEYGAETIVGFHQDPPLMFTEEYQKSLLEQYHVVLDQKRRKYVVGELIWNFADFMTEQSPTRVLGNKKGVFTRQRQPKSAAFLLRERYWKIANETRYPHSIAKSQCLENSPFT</sequence>
<name>BGLR_CHLAE</name>
<feature type="signal peptide" evidence="1">
    <location>
        <begin position="1" status="less than"/>
        <end position="19"/>
    </location>
</feature>
<feature type="chain" id="PRO_0000012159" description="Beta-glucuronidase">
    <location>
        <begin position="20"/>
        <end position="648"/>
    </location>
</feature>
<feature type="active site" description="Proton donor">
    <location>
        <position position="448"/>
    </location>
</feature>
<feature type="glycosylation site" description="N-linked (GlcNAc...) asparagine" evidence="2">
    <location>
        <position position="170"/>
    </location>
</feature>
<feature type="glycosylation site" description="N-linked (GlcNAc...) asparagine" evidence="2">
    <location>
        <position position="269"/>
    </location>
</feature>
<feature type="glycosylation site" description="N-linked (GlcNAc...) asparagine" evidence="2">
    <location>
        <position position="417"/>
    </location>
</feature>
<feature type="glycosylation site" description="N-linked (GlcNAc...) asparagine" evidence="2">
    <location>
        <position position="628"/>
    </location>
</feature>
<feature type="non-terminal residue">
    <location>
        <position position="1"/>
    </location>
</feature>
<proteinExistence type="evidence at transcript level"/>